<name>PFMAJ_PESFW</name>
<evidence type="ECO:0000250" key="1">
    <source>
        <dbReference type="UniProtKB" id="P56221"/>
    </source>
</evidence>
<evidence type="ECO:0000269" key="2">
    <source>
    </source>
</evidence>
<evidence type="ECO:0000269" key="3">
    <source>
    </source>
</evidence>
<evidence type="ECO:0000303" key="4">
    <source>
    </source>
</evidence>
<evidence type="ECO:0000305" key="5"/>
<evidence type="ECO:0000305" key="6">
    <source>
    </source>
</evidence>
<evidence type="ECO:0000305" key="7">
    <source>
    </source>
</evidence>
<proteinExistence type="evidence at protein level"/>
<sequence length="191" mass="21808">MVNGNITFDDYLGLQQCLVEWADSYDSKDWSRLRKCIAPTLRIDYRSFLDKLWEAMPAEEFIAMISDKAVLGDPLLMTQHFIGGTKWEKISDTEVVGVHQLRVPHQRYTDETRSTVAVKGHAHSTNTHWYRKVNGEWKFAGLCPEIRWGEFDFDKVFASGREAFGTEDTAAEGISAKHQQQQHGRVTVSAV</sequence>
<keyword id="KW-0967">Endosome</keyword>
<keyword id="KW-0456">Lyase</keyword>
<keyword id="KW-0470">Melanin biosynthesis</keyword>
<keyword id="KW-1185">Reference proteome</keyword>
<accession>W3XEE6</accession>
<dbReference type="EC" id="4.2.1.94" evidence="6"/>
<dbReference type="EMBL" id="KI912110">
    <property type="protein sequence ID" value="ETS84473.1"/>
    <property type="molecule type" value="Genomic_DNA"/>
</dbReference>
<dbReference type="RefSeq" id="XP_007829270.1">
    <property type="nucleotide sequence ID" value="XM_007831079.1"/>
</dbReference>
<dbReference type="SMR" id="W3XEE6"/>
<dbReference type="STRING" id="1229662.W3XEE6"/>
<dbReference type="GeneID" id="19267511"/>
<dbReference type="KEGG" id="pfy:PFICI_02498"/>
<dbReference type="eggNOG" id="ENOG502SNND">
    <property type="taxonomic scope" value="Eukaryota"/>
</dbReference>
<dbReference type="HOGENOM" id="CLU_101889_0_0_1"/>
<dbReference type="InParanoid" id="W3XEE6"/>
<dbReference type="OMA" id="SACYEWA"/>
<dbReference type="OrthoDB" id="5281072at2759"/>
<dbReference type="UniPathway" id="UPA00785"/>
<dbReference type="Proteomes" id="UP000030651">
    <property type="component" value="Unassembled WGS sequence"/>
</dbReference>
<dbReference type="GO" id="GO:0005768">
    <property type="term" value="C:endosome"/>
    <property type="evidence" value="ECO:0007669"/>
    <property type="project" value="UniProtKB-SubCell"/>
</dbReference>
<dbReference type="GO" id="GO:0030411">
    <property type="term" value="F:scytalone dehydratase activity"/>
    <property type="evidence" value="ECO:0007669"/>
    <property type="project" value="UniProtKB-EC"/>
</dbReference>
<dbReference type="GO" id="GO:0042438">
    <property type="term" value="P:melanin biosynthetic process"/>
    <property type="evidence" value="ECO:0007669"/>
    <property type="project" value="UniProtKB-UniPathway"/>
</dbReference>
<dbReference type="CDD" id="cd00531">
    <property type="entry name" value="NTF2_like"/>
    <property type="match status" value="1"/>
</dbReference>
<dbReference type="Gene3D" id="3.10.450.50">
    <property type="match status" value="1"/>
</dbReference>
<dbReference type="InterPro" id="IPR032710">
    <property type="entry name" value="NTF2-like_dom_sf"/>
</dbReference>
<dbReference type="InterPro" id="IPR004235">
    <property type="entry name" value="Scytalone_dehydratase"/>
</dbReference>
<dbReference type="InterPro" id="IPR049884">
    <property type="entry name" value="Scytalone_dh"/>
</dbReference>
<dbReference type="Pfam" id="PF02982">
    <property type="entry name" value="Scytalone_dh"/>
    <property type="match status" value="1"/>
</dbReference>
<dbReference type="PIRSF" id="PIRSF024851">
    <property type="entry name" value="SCD1"/>
    <property type="match status" value="1"/>
</dbReference>
<dbReference type="SUPFAM" id="SSF54427">
    <property type="entry name" value="NTF2-like"/>
    <property type="match status" value="1"/>
</dbReference>
<protein>
    <recommendedName>
        <fullName evidence="4">Scytalone dehydratase PfmaJ</fullName>
        <ecNumber evidence="6">4.2.1.94</ecNumber>
    </recommendedName>
    <alternativeName>
        <fullName evidence="4">Conidial pigment biosynthesis protein J</fullName>
    </alternativeName>
</protein>
<reference key="1">
    <citation type="journal article" date="2015" name="BMC Genomics">
        <title>Genomic and transcriptomic analysis of the endophytic fungus Pestalotiopsis fici reveals its lifestyle and high potential for synthesis of natural products.</title>
        <authorList>
            <person name="Wang X."/>
            <person name="Zhang X."/>
            <person name="Liu L."/>
            <person name="Xiang M."/>
            <person name="Wang W."/>
            <person name="Sun X."/>
            <person name="Che Y."/>
            <person name="Guo L."/>
            <person name="Liu G."/>
            <person name="Guo L."/>
            <person name="Wang C."/>
            <person name="Yin W.B."/>
            <person name="Stadler M."/>
            <person name="Zhang X."/>
            <person name="Liu X."/>
        </authorList>
    </citation>
    <scope>NUCLEOTIDE SEQUENCE [LARGE SCALE GENOMIC DNA]</scope>
    <source>
        <strain>W106-1 / CGMCC3.15140</strain>
    </source>
</reference>
<reference key="2">
    <citation type="journal article" date="2017" name="Mol. Microbiol.">
        <title>A cryptic pigment biosynthetic pathway uncovered by heterologous expression is essential for conidial development in Pestalotiopsis fici.</title>
        <authorList>
            <person name="Zhang P."/>
            <person name="Wang X."/>
            <person name="Fan A."/>
            <person name="Zheng Y."/>
            <person name="Liu X."/>
            <person name="Wang S."/>
            <person name="Zou H."/>
            <person name="Oakley B.R."/>
            <person name="Keller N.P."/>
            <person name="Yin W.B."/>
        </authorList>
    </citation>
    <scope>FUNCTION</scope>
    <scope>PATHWAY</scope>
</reference>
<reference key="3">
    <citation type="journal article" date="2019" name="Mol. Microbiol.">
        <title>Two transcription factors cooperatively regulate DHN melanin biosynthesis and development in Pestalotiopsis fici.</title>
        <authorList>
            <person name="Zhang P."/>
            <person name="Zhou S."/>
            <person name="Wang G."/>
            <person name="An Z."/>
            <person name="Liu X."/>
            <person name="Li K."/>
            <person name="Yin W.B."/>
        </authorList>
    </citation>
    <scope>INDUCTION</scope>
    <scope>FUNCTION</scope>
    <scope>CATALYTIC ACTIVITY</scope>
    <scope>PATHWAY</scope>
</reference>
<organism>
    <name type="scientific">Pestalotiopsis fici (strain W106-1 / CGMCC3.15140)</name>
    <dbReference type="NCBI Taxonomy" id="1229662"/>
    <lineage>
        <taxon>Eukaryota</taxon>
        <taxon>Fungi</taxon>
        <taxon>Dikarya</taxon>
        <taxon>Ascomycota</taxon>
        <taxon>Pezizomycotina</taxon>
        <taxon>Sordariomycetes</taxon>
        <taxon>Xylariomycetidae</taxon>
        <taxon>Amphisphaeriales</taxon>
        <taxon>Sporocadaceae</taxon>
        <taxon>Pestalotiopsis</taxon>
    </lineage>
</organism>
<gene>
    <name evidence="4" type="primary">Pfmaj</name>
    <name type="ORF">PFICI_02498</name>
</gene>
<comment type="function">
    <text evidence="2 3 6 7">Scytalone dehydratase involved the biosynthesis of dihydroxynaphthalene (DHN)-melanin, a bluish-green pigment forming a dark layer in the conidial wall that protects the conidia from UV radiations (PubMed:28517364). The first step of the pathway is the production of the pentaketide 1,3,6,8-tetrahydroxynaphthalene (1,3,6,8-THN or T4HN) by the polyketide synthase PfmaE though condensation of acetyl-CoA with malonyl-CoA. T4HN is not stable and easily oxidizes into the stable form flaviolin (PubMed:28517364). T4HN is also substrate of the hydroxynaphthalene reductase PfmaG to yield scytalone (PubMed:28517364). The scytalone dehydratase PfmaJ then reduces scytalone to 1,3,8-THN (PubMed:31116900). 1,3,8-THN is then substrate of the hydroxynaphthalene reductase PfmaI to yield vermelone (Probable). Vermelone is further converted by the multicopper oxidase PfmaD to 1,8-DHN (Probable). Finally the laccase PFICI_06862 transforms 1,8-DHN to DHN-melanin (Probable). The roles of the 5-oxoprolinase PfmaA and the proline iminopeptidase PfmaB within the cluster have not been elucidated yet (Probable).</text>
</comment>
<comment type="catalytic activity">
    <reaction evidence="3">
        <text>scytalone = 1,3,8-trihydroxynaphthalene + H2O</text>
        <dbReference type="Rhea" id="RHEA:24396"/>
        <dbReference type="ChEBI" id="CHEBI:15377"/>
        <dbReference type="ChEBI" id="CHEBI:16945"/>
        <dbReference type="ChEBI" id="CHEBI:18393"/>
        <dbReference type="EC" id="4.2.1.94"/>
    </reaction>
</comment>
<comment type="pathway">
    <text evidence="3">Pigment biosynthesis; melanin biosynthesis.</text>
</comment>
<comment type="subunit">
    <text evidence="1">Homotrimer (By similarity). Each subunit contains an active site, located in the central part of the hydrophobic core of the monomer, which functions independently (By similarity).</text>
</comment>
<comment type="subcellular location">
    <subcellularLocation>
        <location evidence="1">Endosome</location>
    </subcellularLocation>
</comment>
<comment type="induction">
    <text evidence="3">Expression is positively regulazed by the cluster-specific transcription factor pfmaF.</text>
</comment>
<comment type="similarity">
    <text evidence="5">Belongs to the scytalone dehydratase family.</text>
</comment>
<feature type="chain" id="PRO_0000445356" description="Scytalone dehydratase PfmaJ">
    <location>
        <begin position="1"/>
        <end position="191"/>
    </location>
</feature>
<feature type="active site" evidence="1">
    <location>
        <position position="80"/>
    </location>
</feature>
<feature type="active site" evidence="1">
    <location>
        <position position="105"/>
    </location>
</feature>
<feature type="binding site" evidence="1">
    <location>
        <position position="25"/>
    </location>
    <ligand>
        <name>substrate</name>
    </ligand>
</feature>
<feature type="binding site" evidence="1">
    <location>
        <position position="45"/>
    </location>
    <ligand>
        <name>substrate</name>
    </ligand>
</feature>
<feature type="binding site" evidence="1">
    <location>
        <position position="48"/>
    </location>
    <ligand>
        <name>substrate</name>
    </ligand>
</feature>
<feature type="binding site" evidence="1">
    <location>
        <position position="126"/>
    </location>
    <ligand>
        <name>substrate</name>
    </ligand>
</feature>